<gene>
    <name evidence="1" type="primary">rpmG</name>
    <name type="ordered locus">BSUIS_B0606</name>
</gene>
<keyword id="KW-0687">Ribonucleoprotein</keyword>
<keyword id="KW-0689">Ribosomal protein</keyword>
<proteinExistence type="inferred from homology"/>
<reference key="1">
    <citation type="submission" date="2007-12" db="EMBL/GenBank/DDBJ databases">
        <title>Brucella suis ATCC 23445 whole genome shotgun sequencing project.</title>
        <authorList>
            <person name="Setubal J.C."/>
            <person name="Bowns C."/>
            <person name="Boyle S."/>
            <person name="Crasta O.R."/>
            <person name="Czar M.J."/>
            <person name="Dharmanolla C."/>
            <person name="Gillespie J.J."/>
            <person name="Kenyon R.W."/>
            <person name="Lu J."/>
            <person name="Mane S."/>
            <person name="Mohapatra S."/>
            <person name="Nagrani S."/>
            <person name="Purkayastha A."/>
            <person name="Rajasimha H.K."/>
            <person name="Shallom J.M."/>
            <person name="Shallom S."/>
            <person name="Shukla M."/>
            <person name="Snyder E.E."/>
            <person name="Sobral B.W."/>
            <person name="Wattam A.R."/>
            <person name="Will R."/>
            <person name="Williams K."/>
            <person name="Yoo H."/>
            <person name="Bruce D."/>
            <person name="Detter C."/>
            <person name="Munk C."/>
            <person name="Brettin T.S."/>
        </authorList>
    </citation>
    <scope>NUCLEOTIDE SEQUENCE [LARGE SCALE GENOMIC DNA]</scope>
    <source>
        <strain>ATCC 23445 / NCTC 10510</strain>
    </source>
</reference>
<comment type="similarity">
    <text evidence="1">Belongs to the bacterial ribosomal protein bL33 family.</text>
</comment>
<accession>A9WYS8</accession>
<name>RL33_BRUSI</name>
<feature type="chain" id="PRO_0000356413" description="Large ribosomal subunit protein bL33">
    <location>
        <begin position="1"/>
        <end position="55"/>
    </location>
</feature>
<evidence type="ECO:0000255" key="1">
    <source>
        <dbReference type="HAMAP-Rule" id="MF_00294"/>
    </source>
</evidence>
<evidence type="ECO:0000305" key="2"/>
<protein>
    <recommendedName>
        <fullName evidence="1">Large ribosomal subunit protein bL33</fullName>
    </recommendedName>
    <alternativeName>
        <fullName evidence="2">50S ribosomal protein L33</fullName>
    </alternativeName>
</protein>
<sequence>MAKATTIKIKLLSTADTGFFYVTKKNSRTMTEKMTKTKYDPIARKHVEFKETKIK</sequence>
<organism>
    <name type="scientific">Brucella suis (strain ATCC 23445 / NCTC 10510)</name>
    <dbReference type="NCBI Taxonomy" id="470137"/>
    <lineage>
        <taxon>Bacteria</taxon>
        <taxon>Pseudomonadati</taxon>
        <taxon>Pseudomonadota</taxon>
        <taxon>Alphaproteobacteria</taxon>
        <taxon>Hyphomicrobiales</taxon>
        <taxon>Brucellaceae</taxon>
        <taxon>Brucella/Ochrobactrum group</taxon>
        <taxon>Brucella</taxon>
    </lineage>
</organism>
<dbReference type="EMBL" id="CP000912">
    <property type="protein sequence ID" value="ABY39594.1"/>
    <property type="molecule type" value="Genomic_DNA"/>
</dbReference>
<dbReference type="RefSeq" id="WP_002966024.1">
    <property type="nucleotide sequence ID" value="NC_010167.1"/>
</dbReference>
<dbReference type="SMR" id="A9WYS8"/>
<dbReference type="GeneID" id="97535268"/>
<dbReference type="KEGG" id="bmt:BSUIS_B0606"/>
<dbReference type="HOGENOM" id="CLU_190949_1_1_5"/>
<dbReference type="Proteomes" id="UP000008545">
    <property type="component" value="Chromosome II"/>
</dbReference>
<dbReference type="GO" id="GO:0022625">
    <property type="term" value="C:cytosolic large ribosomal subunit"/>
    <property type="evidence" value="ECO:0007669"/>
    <property type="project" value="TreeGrafter"/>
</dbReference>
<dbReference type="GO" id="GO:0003735">
    <property type="term" value="F:structural constituent of ribosome"/>
    <property type="evidence" value="ECO:0007669"/>
    <property type="project" value="InterPro"/>
</dbReference>
<dbReference type="GO" id="GO:0006412">
    <property type="term" value="P:translation"/>
    <property type="evidence" value="ECO:0007669"/>
    <property type="project" value="UniProtKB-UniRule"/>
</dbReference>
<dbReference type="Gene3D" id="2.20.28.120">
    <property type="entry name" value="Ribosomal protein L33"/>
    <property type="match status" value="1"/>
</dbReference>
<dbReference type="HAMAP" id="MF_00294">
    <property type="entry name" value="Ribosomal_bL33"/>
    <property type="match status" value="1"/>
</dbReference>
<dbReference type="InterPro" id="IPR001705">
    <property type="entry name" value="Ribosomal_bL33"/>
</dbReference>
<dbReference type="InterPro" id="IPR018264">
    <property type="entry name" value="Ribosomal_bL33_CS"/>
</dbReference>
<dbReference type="InterPro" id="IPR038584">
    <property type="entry name" value="Ribosomal_bL33_sf"/>
</dbReference>
<dbReference type="InterPro" id="IPR011332">
    <property type="entry name" value="Ribosomal_zn-bd"/>
</dbReference>
<dbReference type="NCBIfam" id="NF001860">
    <property type="entry name" value="PRK00595.1"/>
    <property type="match status" value="1"/>
</dbReference>
<dbReference type="NCBIfam" id="TIGR01023">
    <property type="entry name" value="rpmG_bact"/>
    <property type="match status" value="1"/>
</dbReference>
<dbReference type="PANTHER" id="PTHR15238">
    <property type="entry name" value="54S RIBOSOMAL PROTEIN L39, MITOCHONDRIAL"/>
    <property type="match status" value="1"/>
</dbReference>
<dbReference type="PANTHER" id="PTHR15238:SF1">
    <property type="entry name" value="LARGE RIBOSOMAL SUBUNIT PROTEIN BL33M"/>
    <property type="match status" value="1"/>
</dbReference>
<dbReference type="Pfam" id="PF00471">
    <property type="entry name" value="Ribosomal_L33"/>
    <property type="match status" value="1"/>
</dbReference>
<dbReference type="SUPFAM" id="SSF57829">
    <property type="entry name" value="Zn-binding ribosomal proteins"/>
    <property type="match status" value="1"/>
</dbReference>
<dbReference type="PROSITE" id="PS00582">
    <property type="entry name" value="RIBOSOMAL_L33"/>
    <property type="match status" value="1"/>
</dbReference>